<proteinExistence type="evidence at transcript level"/>
<protein>
    <recommendedName>
        <fullName>AT-rich binding protein</fullName>
    </recommendedName>
    <alternativeName>
        <fullName>(A+T)-stretch binding protein</fullName>
    </alternativeName>
</protein>
<dbReference type="EMBL" id="AE014298">
    <property type="protein sequence ID" value="EDP28026.2"/>
    <property type="molecule type" value="Genomic_DNA"/>
</dbReference>
<dbReference type="EMBL" id="BT003486">
    <property type="protein sequence ID" value="AAO39489.1"/>
    <property type="status" value="ALT_INIT"/>
    <property type="molecule type" value="mRNA"/>
</dbReference>
<dbReference type="RefSeq" id="NP_001104481.2">
    <property type="nucleotide sequence ID" value="NM_001111011.3"/>
</dbReference>
<dbReference type="SMR" id="Q86P48"/>
<dbReference type="BioGRID" id="625223">
    <property type="interactions" value="11"/>
</dbReference>
<dbReference type="FunCoup" id="Q86P48">
    <property type="interactions" value="25"/>
</dbReference>
<dbReference type="IntAct" id="Q86P48">
    <property type="interactions" value="11"/>
</dbReference>
<dbReference type="STRING" id="7227.FBpp0291188"/>
<dbReference type="GlyGen" id="Q86P48">
    <property type="glycosylation" value="1 site"/>
</dbReference>
<dbReference type="PaxDb" id="7227-FBpp0291188"/>
<dbReference type="DNASU" id="5740592"/>
<dbReference type="EnsemblMetazoa" id="FBtr0301978">
    <property type="protein sequence ID" value="FBpp0291188"/>
    <property type="gene ID" value="FBgn0039946"/>
</dbReference>
<dbReference type="GeneID" id="5740592"/>
<dbReference type="KEGG" id="dme:Dmel_CG17172"/>
<dbReference type="UCSC" id="CG17172-RA">
    <property type="organism name" value="d. melanogaster"/>
</dbReference>
<dbReference type="AGR" id="FB:FBgn0039946"/>
<dbReference type="CTD" id="5740592"/>
<dbReference type="FlyBase" id="FBgn0039946">
    <property type="gene designation" value="ATbp"/>
</dbReference>
<dbReference type="VEuPathDB" id="VectorBase:FBgn0039946"/>
<dbReference type="eggNOG" id="KOG1721">
    <property type="taxonomic scope" value="Eukaryota"/>
</dbReference>
<dbReference type="HOGENOM" id="CLU_712250_0_0_1"/>
<dbReference type="InParanoid" id="Q86P48"/>
<dbReference type="OMA" id="ERWYICD"/>
<dbReference type="OrthoDB" id="3437960at2759"/>
<dbReference type="PhylomeDB" id="Q86P48"/>
<dbReference type="SignaLink" id="Q86P48"/>
<dbReference type="BioGRID-ORCS" id="5740592">
    <property type="hits" value="0 hits in 1 CRISPR screen"/>
</dbReference>
<dbReference type="GenomeRNAi" id="5740592"/>
<dbReference type="PRO" id="PR:Q86P48"/>
<dbReference type="Proteomes" id="UP000000803">
    <property type="component" value="Chromosome X"/>
</dbReference>
<dbReference type="Bgee" id="FBgn0039946">
    <property type="expression patterns" value="Expressed in wing disc and 25 other cell types or tissues"/>
</dbReference>
<dbReference type="GO" id="GO:0005634">
    <property type="term" value="C:nucleus"/>
    <property type="evidence" value="ECO:0007669"/>
    <property type="project" value="UniProtKB-SubCell"/>
</dbReference>
<dbReference type="GO" id="GO:0000981">
    <property type="term" value="F:DNA-binding transcription factor activity, RNA polymerase II-specific"/>
    <property type="evidence" value="ECO:0000318"/>
    <property type="project" value="GO_Central"/>
</dbReference>
<dbReference type="GO" id="GO:0000978">
    <property type="term" value="F:RNA polymerase II cis-regulatory region sequence-specific DNA binding"/>
    <property type="evidence" value="ECO:0000318"/>
    <property type="project" value="GO_Central"/>
</dbReference>
<dbReference type="GO" id="GO:0008270">
    <property type="term" value="F:zinc ion binding"/>
    <property type="evidence" value="ECO:0007669"/>
    <property type="project" value="UniProtKB-KW"/>
</dbReference>
<dbReference type="GO" id="GO:0045944">
    <property type="term" value="P:positive regulation of transcription by RNA polymerase II"/>
    <property type="evidence" value="ECO:0000314"/>
    <property type="project" value="FlyBase"/>
</dbReference>
<dbReference type="GO" id="GO:0006355">
    <property type="term" value="P:regulation of DNA-templated transcription"/>
    <property type="evidence" value="ECO:0000314"/>
    <property type="project" value="FlyBase"/>
</dbReference>
<dbReference type="GO" id="GO:0006357">
    <property type="term" value="P:regulation of transcription by RNA polymerase II"/>
    <property type="evidence" value="ECO:0000314"/>
    <property type="project" value="UniProtKB"/>
</dbReference>
<dbReference type="Gene3D" id="3.30.160.60">
    <property type="entry name" value="Classic Zinc Finger"/>
    <property type="match status" value="2"/>
</dbReference>
<dbReference type="InterPro" id="IPR050331">
    <property type="entry name" value="Zinc_finger"/>
</dbReference>
<dbReference type="InterPro" id="IPR036236">
    <property type="entry name" value="Znf_C2H2_sf"/>
</dbReference>
<dbReference type="InterPro" id="IPR013087">
    <property type="entry name" value="Znf_C2H2_type"/>
</dbReference>
<dbReference type="PANTHER" id="PTHR16515:SF66">
    <property type="entry name" value="C2H2-TYPE DOMAIN-CONTAINING PROTEIN"/>
    <property type="match status" value="1"/>
</dbReference>
<dbReference type="PANTHER" id="PTHR16515">
    <property type="entry name" value="PR DOMAIN ZINC FINGER PROTEIN"/>
    <property type="match status" value="1"/>
</dbReference>
<dbReference type="SMART" id="SM00355">
    <property type="entry name" value="ZnF_C2H2"/>
    <property type="match status" value="3"/>
</dbReference>
<dbReference type="SUPFAM" id="SSF57667">
    <property type="entry name" value="beta-beta-alpha zinc fingers"/>
    <property type="match status" value="1"/>
</dbReference>
<dbReference type="PROSITE" id="PS00028">
    <property type="entry name" value="ZINC_FINGER_C2H2_1"/>
    <property type="match status" value="3"/>
</dbReference>
<dbReference type="PROSITE" id="PS50157">
    <property type="entry name" value="ZINC_FINGER_C2H2_2"/>
    <property type="match status" value="2"/>
</dbReference>
<evidence type="ECO:0000255" key="1">
    <source>
        <dbReference type="PROSITE-ProRule" id="PRU00042"/>
    </source>
</evidence>
<evidence type="ECO:0000256" key="2">
    <source>
        <dbReference type="SAM" id="MobiDB-lite"/>
    </source>
</evidence>
<evidence type="ECO:0000269" key="3">
    <source>
    </source>
</evidence>
<evidence type="ECO:0000269" key="4">
    <source>
    </source>
</evidence>
<evidence type="ECO:0000305" key="5"/>
<evidence type="ECO:0000312" key="6">
    <source>
        <dbReference type="EMBL" id="AAO39489.1"/>
    </source>
</evidence>
<evidence type="ECO:0000312" key="7">
    <source>
        <dbReference type="FlyBase" id="FBgn0039946"/>
    </source>
</evidence>
<feature type="chain" id="PRO_0000378614" description="AT-rich binding protein">
    <location>
        <begin position="1"/>
        <end position="388"/>
    </location>
</feature>
<feature type="zinc finger region" description="C2H2-type 1" evidence="1">
    <location>
        <begin position="29"/>
        <end position="52"/>
    </location>
</feature>
<feature type="zinc finger region" description="C2H2-type 2" evidence="1">
    <location>
        <begin position="321"/>
        <end position="345"/>
    </location>
</feature>
<feature type="zinc finger region" description="C2H2-type 3" evidence="1">
    <location>
        <begin position="351"/>
        <end position="374"/>
    </location>
</feature>
<feature type="region of interest" description="Disordered" evidence="2">
    <location>
        <begin position="138"/>
        <end position="168"/>
    </location>
</feature>
<feature type="region of interest" description="Disordered" evidence="2">
    <location>
        <begin position="240"/>
        <end position="265"/>
    </location>
</feature>
<feature type="compositionally biased region" description="Low complexity" evidence="2">
    <location>
        <begin position="138"/>
        <end position="165"/>
    </location>
</feature>
<feature type="compositionally biased region" description="Low complexity" evidence="2">
    <location>
        <begin position="249"/>
        <end position="265"/>
    </location>
</feature>
<comment type="function">
    <text evidence="4">May be a transcription factor for genes having (A+T) stretches in their promoter and/or enhancer regions. Binds to AT rich DNA.</text>
</comment>
<comment type="subcellular location">
    <subcellularLocation>
        <location evidence="4 5">Nucleus</location>
    </subcellularLocation>
</comment>
<comment type="sequence caution" evidence="5">
    <conflict type="erroneous initiation">
        <sequence resource="EMBL-CDS" id="AAO39489"/>
    </conflict>
    <text>Extended N-terminus.</text>
</comment>
<organism>
    <name type="scientific">Drosophila melanogaster</name>
    <name type="common">Fruit fly</name>
    <dbReference type="NCBI Taxonomy" id="7227"/>
    <lineage>
        <taxon>Eukaryota</taxon>
        <taxon>Metazoa</taxon>
        <taxon>Ecdysozoa</taxon>
        <taxon>Arthropoda</taxon>
        <taxon>Hexapoda</taxon>
        <taxon>Insecta</taxon>
        <taxon>Pterygota</taxon>
        <taxon>Neoptera</taxon>
        <taxon>Endopterygota</taxon>
        <taxon>Diptera</taxon>
        <taxon>Brachycera</taxon>
        <taxon>Muscomorpha</taxon>
        <taxon>Ephydroidea</taxon>
        <taxon>Drosophilidae</taxon>
        <taxon>Drosophila</taxon>
        <taxon>Sophophora</taxon>
    </lineage>
</organism>
<reference evidence="5" key="1">
    <citation type="journal article" date="2002" name="Insect Mol. Biol.">
        <title>Identification and characterization of a Drosophila homologue of ATBP.</title>
        <authorList>
            <person name="Aozasa N."/>
            <person name="Kubo T."/>
            <person name="Sekimizu K."/>
            <person name="Natori S."/>
        </authorList>
    </citation>
    <scope>NUCLEOTIDE SEQUENCE [GENOMIC DNA]</scope>
    <scope>FUNCTION</scope>
</reference>
<reference key="2">
    <citation type="journal article" date="2000" name="Science">
        <title>The genome sequence of Drosophila melanogaster.</title>
        <authorList>
            <person name="Adams M.D."/>
            <person name="Celniker S.E."/>
            <person name="Holt R.A."/>
            <person name="Evans C.A."/>
            <person name="Gocayne J.D."/>
            <person name="Amanatides P.G."/>
            <person name="Scherer S.E."/>
            <person name="Li P.W."/>
            <person name="Hoskins R.A."/>
            <person name="Galle R.F."/>
            <person name="George R.A."/>
            <person name="Lewis S.E."/>
            <person name="Richards S."/>
            <person name="Ashburner M."/>
            <person name="Henderson S.N."/>
            <person name="Sutton G.G."/>
            <person name="Wortman J.R."/>
            <person name="Yandell M.D."/>
            <person name="Zhang Q."/>
            <person name="Chen L.X."/>
            <person name="Brandon R.C."/>
            <person name="Rogers Y.-H.C."/>
            <person name="Blazej R.G."/>
            <person name="Champe M."/>
            <person name="Pfeiffer B.D."/>
            <person name="Wan K.H."/>
            <person name="Doyle C."/>
            <person name="Baxter E.G."/>
            <person name="Helt G."/>
            <person name="Nelson C.R."/>
            <person name="Miklos G.L.G."/>
            <person name="Abril J.F."/>
            <person name="Agbayani A."/>
            <person name="An H.-J."/>
            <person name="Andrews-Pfannkoch C."/>
            <person name="Baldwin D."/>
            <person name="Ballew R.M."/>
            <person name="Basu A."/>
            <person name="Baxendale J."/>
            <person name="Bayraktaroglu L."/>
            <person name="Beasley E.M."/>
            <person name="Beeson K.Y."/>
            <person name="Benos P.V."/>
            <person name="Berman B.P."/>
            <person name="Bhandari D."/>
            <person name="Bolshakov S."/>
            <person name="Borkova D."/>
            <person name="Botchan M.R."/>
            <person name="Bouck J."/>
            <person name="Brokstein P."/>
            <person name="Brottier P."/>
            <person name="Burtis K.C."/>
            <person name="Busam D.A."/>
            <person name="Butler H."/>
            <person name="Cadieu E."/>
            <person name="Center A."/>
            <person name="Chandra I."/>
            <person name="Cherry J.M."/>
            <person name="Cawley S."/>
            <person name="Dahlke C."/>
            <person name="Davenport L.B."/>
            <person name="Davies P."/>
            <person name="de Pablos B."/>
            <person name="Delcher A."/>
            <person name="Deng Z."/>
            <person name="Mays A.D."/>
            <person name="Dew I."/>
            <person name="Dietz S.M."/>
            <person name="Dodson K."/>
            <person name="Doup L.E."/>
            <person name="Downes M."/>
            <person name="Dugan-Rocha S."/>
            <person name="Dunkov B.C."/>
            <person name="Dunn P."/>
            <person name="Durbin K.J."/>
            <person name="Evangelista C.C."/>
            <person name="Ferraz C."/>
            <person name="Ferriera S."/>
            <person name="Fleischmann W."/>
            <person name="Fosler C."/>
            <person name="Gabrielian A.E."/>
            <person name="Garg N.S."/>
            <person name="Gelbart W.M."/>
            <person name="Glasser K."/>
            <person name="Glodek A."/>
            <person name="Gong F."/>
            <person name="Gorrell J.H."/>
            <person name="Gu Z."/>
            <person name="Guan P."/>
            <person name="Harris M."/>
            <person name="Harris N.L."/>
            <person name="Harvey D.A."/>
            <person name="Heiman T.J."/>
            <person name="Hernandez J.R."/>
            <person name="Houck J."/>
            <person name="Hostin D."/>
            <person name="Houston K.A."/>
            <person name="Howland T.J."/>
            <person name="Wei M.-H."/>
            <person name="Ibegwam C."/>
            <person name="Jalali M."/>
            <person name="Kalush F."/>
            <person name="Karpen G.H."/>
            <person name="Ke Z."/>
            <person name="Kennison J.A."/>
            <person name="Ketchum K.A."/>
            <person name="Kimmel B.E."/>
            <person name="Kodira C.D."/>
            <person name="Kraft C.L."/>
            <person name="Kravitz S."/>
            <person name="Kulp D."/>
            <person name="Lai Z."/>
            <person name="Lasko P."/>
            <person name="Lei Y."/>
            <person name="Levitsky A.A."/>
            <person name="Li J.H."/>
            <person name="Li Z."/>
            <person name="Liang Y."/>
            <person name="Lin X."/>
            <person name="Liu X."/>
            <person name="Mattei B."/>
            <person name="McIntosh T.C."/>
            <person name="McLeod M.P."/>
            <person name="McPherson D."/>
            <person name="Merkulov G."/>
            <person name="Milshina N.V."/>
            <person name="Mobarry C."/>
            <person name="Morris J."/>
            <person name="Moshrefi A."/>
            <person name="Mount S.M."/>
            <person name="Moy M."/>
            <person name="Murphy B."/>
            <person name="Murphy L."/>
            <person name="Muzny D.M."/>
            <person name="Nelson D.L."/>
            <person name="Nelson D.R."/>
            <person name="Nelson K.A."/>
            <person name="Nixon K."/>
            <person name="Nusskern D.R."/>
            <person name="Pacleb J.M."/>
            <person name="Palazzolo M."/>
            <person name="Pittman G.S."/>
            <person name="Pan S."/>
            <person name="Pollard J."/>
            <person name="Puri V."/>
            <person name="Reese M.G."/>
            <person name="Reinert K."/>
            <person name="Remington K."/>
            <person name="Saunders R.D.C."/>
            <person name="Scheeler F."/>
            <person name="Shen H."/>
            <person name="Shue B.C."/>
            <person name="Siden-Kiamos I."/>
            <person name="Simpson M."/>
            <person name="Skupski M.P."/>
            <person name="Smith T.J."/>
            <person name="Spier E."/>
            <person name="Spradling A.C."/>
            <person name="Stapleton M."/>
            <person name="Strong R."/>
            <person name="Sun E."/>
            <person name="Svirskas R."/>
            <person name="Tector C."/>
            <person name="Turner R."/>
            <person name="Venter E."/>
            <person name="Wang A.H."/>
            <person name="Wang X."/>
            <person name="Wang Z.-Y."/>
            <person name="Wassarman D.A."/>
            <person name="Weinstock G.M."/>
            <person name="Weissenbach J."/>
            <person name="Williams S.M."/>
            <person name="Woodage T."/>
            <person name="Worley K.C."/>
            <person name="Wu D."/>
            <person name="Yang S."/>
            <person name="Yao Q.A."/>
            <person name="Ye J."/>
            <person name="Yeh R.-F."/>
            <person name="Zaveri J.S."/>
            <person name="Zhan M."/>
            <person name="Zhang G."/>
            <person name="Zhao Q."/>
            <person name="Zheng L."/>
            <person name="Zheng X.H."/>
            <person name="Zhong F.N."/>
            <person name="Zhong W."/>
            <person name="Zhou X."/>
            <person name="Zhu S.C."/>
            <person name="Zhu X."/>
            <person name="Smith H.O."/>
            <person name="Gibbs R.A."/>
            <person name="Myers E.W."/>
            <person name="Rubin G.M."/>
            <person name="Venter J.C."/>
        </authorList>
    </citation>
    <scope>NUCLEOTIDE SEQUENCE [LARGE SCALE GENOMIC DNA]</scope>
    <source>
        <strain evidence="3">Berkeley</strain>
    </source>
</reference>
<reference evidence="5" key="3">
    <citation type="journal article" date="2002" name="Genome Biol.">
        <title>Annotation of the Drosophila melanogaster euchromatic genome: a systematic review.</title>
        <authorList>
            <person name="Misra S."/>
            <person name="Crosby M.A."/>
            <person name="Mungall C.J."/>
            <person name="Matthews B.B."/>
            <person name="Campbell K.S."/>
            <person name="Hradecky P."/>
            <person name="Huang Y."/>
            <person name="Kaminker J.S."/>
            <person name="Millburn G.H."/>
            <person name="Prochnik S.E."/>
            <person name="Smith C.D."/>
            <person name="Tupy J.L."/>
            <person name="Whitfield E.J."/>
            <person name="Bayraktaroglu L."/>
            <person name="Berman B.P."/>
            <person name="Bettencourt B.R."/>
            <person name="Celniker S.E."/>
            <person name="de Grey A.D.N.J."/>
            <person name="Drysdale R.A."/>
            <person name="Harris N.L."/>
            <person name="Richter J."/>
            <person name="Russo S."/>
            <person name="Schroeder A.J."/>
            <person name="Shu S.Q."/>
            <person name="Stapleton M."/>
            <person name="Yamada C."/>
            <person name="Ashburner M."/>
            <person name="Gelbart W.M."/>
            <person name="Rubin G.M."/>
            <person name="Lewis S.E."/>
        </authorList>
    </citation>
    <scope>GENOME REANNOTATION</scope>
    <source>
        <strain>Berkeley</strain>
    </source>
</reference>
<reference evidence="6" key="4">
    <citation type="submission" date="2005-08" db="EMBL/GenBank/DDBJ databases">
        <authorList>
            <person name="Stapleton M."/>
            <person name="Carlson J.W."/>
            <person name="Chavez C."/>
            <person name="Frise E."/>
            <person name="George R.A."/>
            <person name="Pacleb J.M."/>
            <person name="Park S."/>
            <person name="Wan K.H."/>
            <person name="Yu C."/>
            <person name="Celniker S.E."/>
        </authorList>
    </citation>
    <scope>NUCLEOTIDE SEQUENCE [LARGE SCALE MRNA]</scope>
    <source>
        <strain>Berkeley</strain>
        <tissue>Embryo</tissue>
    </source>
</reference>
<sequence>MGFPRILSKNNKIYTKLGEFCLSGDSFWIVCHTCQEELQTQDQFWKHIQDEHNFMHGVAKEHSRTSSYCLTDVEAAAAAATPGSSSQQGATAISVPLALYTCSTKYSEEEQREVEMHEQQVQHQVQQQQAQQQQAQQQQHQQSQQQGHQQHQVQQQQTHQQLQQQRDVAKELAELHANAVAAAAASAAVVSTGEGTTQSNSAIDIKIEPSSLTLTPEMQAAAAAGGTIYHLPQLVPPPVPPPPPGSGFVSVSASTSTSNTVSTTPPNVLQQQQQLNMSVVPSTAMAAAMLAASQEQLPKDSNSTTASAGSAVSSDDGERWYVCDYETCGLKFKYKSRMELHRVVHSKERRFNCELCSASFKQSCNLSTHRKKKHALRGIKSEILPQRF</sequence>
<accession>Q86P48</accession>
<gene>
    <name evidence="7" type="primary">ATbp</name>
    <name type="ORF">CG17172</name>
</gene>
<name>ATBP_DROME</name>
<keyword id="KW-0238">DNA-binding</keyword>
<keyword id="KW-0479">Metal-binding</keyword>
<keyword id="KW-0539">Nucleus</keyword>
<keyword id="KW-1185">Reference proteome</keyword>
<keyword id="KW-0677">Repeat</keyword>
<keyword id="KW-0804">Transcription</keyword>
<keyword id="KW-0805">Transcription regulation</keyword>
<keyword id="KW-0862">Zinc</keyword>
<keyword id="KW-0863">Zinc-finger</keyword>